<proteinExistence type="inferred from homology"/>
<evidence type="ECO:0000255" key="1">
    <source>
        <dbReference type="HAMAP-Rule" id="MF_00822"/>
    </source>
</evidence>
<evidence type="ECO:0000256" key="2">
    <source>
        <dbReference type="SAM" id="MobiDB-lite"/>
    </source>
</evidence>
<gene>
    <name evidence="1" type="primary">ureE</name>
    <name type="ordered locus">RSc2031</name>
    <name type="ORF">RS03601</name>
</gene>
<protein>
    <recommendedName>
        <fullName evidence="1">Urease accessory protein UreE</fullName>
    </recommendedName>
</protein>
<feature type="chain" id="PRO_0000223430" description="Urease accessory protein UreE">
    <location>
        <begin position="1"/>
        <end position="211"/>
    </location>
</feature>
<feature type="region of interest" description="Disordered" evidence="2">
    <location>
        <begin position="170"/>
        <end position="211"/>
    </location>
</feature>
<feature type="compositionally biased region" description="Basic and acidic residues" evidence="2">
    <location>
        <begin position="176"/>
        <end position="196"/>
    </location>
</feature>
<sequence>MLSIDKHLPAPHGLAAVLVRRAPKLVLPFLARSRSRLRATLDDGREVAVVLPRGTVMRGGDVLVAEDGTLVEVQAAPEQVLRVTSDSRLALMRAAYHLGNRHTPVQVVADALQLEADPVLEDMLVRLGVTVTHVQAPFEPEAGAYGGGHRHGHDATFEEDYAAAQALYREHHGHSHDRGCDHSHSHSHDHDHDHGHVHGPGCGHAPHHRHD</sequence>
<comment type="function">
    <text evidence="1">Involved in urease metallocenter assembly. Binds nickel. Probably functions as a nickel donor during metallocenter assembly.</text>
</comment>
<comment type="subcellular location">
    <subcellularLocation>
        <location evidence="1">Cytoplasm</location>
    </subcellularLocation>
</comment>
<comment type="similarity">
    <text evidence="1">Belongs to the UreE family.</text>
</comment>
<dbReference type="EMBL" id="AL646052">
    <property type="protein sequence ID" value="CAD15733.1"/>
    <property type="molecule type" value="Genomic_DNA"/>
</dbReference>
<dbReference type="RefSeq" id="WP_011001966.1">
    <property type="nucleotide sequence ID" value="NC_003295.1"/>
</dbReference>
<dbReference type="SMR" id="Q8XXT2"/>
<dbReference type="STRING" id="267608.RSc2031"/>
<dbReference type="EnsemblBacteria" id="CAD15733">
    <property type="protein sequence ID" value="CAD15733"/>
    <property type="gene ID" value="RSc2031"/>
</dbReference>
<dbReference type="KEGG" id="rso:RSc2031"/>
<dbReference type="eggNOG" id="COG2371">
    <property type="taxonomic scope" value="Bacteria"/>
</dbReference>
<dbReference type="HOGENOM" id="CLU_093757_0_0_4"/>
<dbReference type="Proteomes" id="UP000001436">
    <property type="component" value="Chromosome"/>
</dbReference>
<dbReference type="GO" id="GO:0005737">
    <property type="term" value="C:cytoplasm"/>
    <property type="evidence" value="ECO:0007669"/>
    <property type="project" value="UniProtKB-SubCell"/>
</dbReference>
<dbReference type="GO" id="GO:0016151">
    <property type="term" value="F:nickel cation binding"/>
    <property type="evidence" value="ECO:0007669"/>
    <property type="project" value="UniProtKB-UniRule"/>
</dbReference>
<dbReference type="GO" id="GO:0051082">
    <property type="term" value="F:unfolded protein binding"/>
    <property type="evidence" value="ECO:0007669"/>
    <property type="project" value="UniProtKB-UniRule"/>
</dbReference>
<dbReference type="GO" id="GO:0006457">
    <property type="term" value="P:protein folding"/>
    <property type="evidence" value="ECO:0007669"/>
    <property type="project" value="InterPro"/>
</dbReference>
<dbReference type="GO" id="GO:0065003">
    <property type="term" value="P:protein-containing complex assembly"/>
    <property type="evidence" value="ECO:0007669"/>
    <property type="project" value="InterPro"/>
</dbReference>
<dbReference type="GO" id="GO:0019627">
    <property type="term" value="P:urea metabolic process"/>
    <property type="evidence" value="ECO:0007669"/>
    <property type="project" value="InterPro"/>
</dbReference>
<dbReference type="CDD" id="cd00571">
    <property type="entry name" value="UreE"/>
    <property type="match status" value="1"/>
</dbReference>
<dbReference type="Gene3D" id="2.60.260.20">
    <property type="entry name" value="Urease metallochaperone UreE, N-terminal domain"/>
    <property type="match status" value="1"/>
</dbReference>
<dbReference type="Gene3D" id="3.30.70.790">
    <property type="entry name" value="UreE, C-terminal domain"/>
    <property type="match status" value="1"/>
</dbReference>
<dbReference type="HAMAP" id="MF_00822">
    <property type="entry name" value="UreE"/>
    <property type="match status" value="1"/>
</dbReference>
<dbReference type="InterPro" id="IPR012406">
    <property type="entry name" value="UreE"/>
</dbReference>
<dbReference type="InterPro" id="IPR007864">
    <property type="entry name" value="UreE_C_dom"/>
</dbReference>
<dbReference type="InterPro" id="IPR004029">
    <property type="entry name" value="UreE_N"/>
</dbReference>
<dbReference type="InterPro" id="IPR036118">
    <property type="entry name" value="UreE_N_sf"/>
</dbReference>
<dbReference type="NCBIfam" id="NF009751">
    <property type="entry name" value="PRK13261.1-1"/>
    <property type="match status" value="1"/>
</dbReference>
<dbReference type="NCBIfam" id="NF009762">
    <property type="entry name" value="PRK13263.1"/>
    <property type="match status" value="1"/>
</dbReference>
<dbReference type="Pfam" id="PF05194">
    <property type="entry name" value="UreE_C"/>
    <property type="match status" value="1"/>
</dbReference>
<dbReference type="Pfam" id="PF02814">
    <property type="entry name" value="UreE_N"/>
    <property type="match status" value="1"/>
</dbReference>
<dbReference type="SMART" id="SM00988">
    <property type="entry name" value="UreE_N"/>
    <property type="match status" value="1"/>
</dbReference>
<dbReference type="SUPFAM" id="SSF69737">
    <property type="entry name" value="Urease metallochaperone UreE, C-terminal domain"/>
    <property type="match status" value="1"/>
</dbReference>
<dbReference type="SUPFAM" id="SSF69287">
    <property type="entry name" value="Urease metallochaperone UreE, N-terminal domain"/>
    <property type="match status" value="1"/>
</dbReference>
<accession>Q8XXT2</accession>
<reference key="1">
    <citation type="journal article" date="2002" name="Nature">
        <title>Genome sequence of the plant pathogen Ralstonia solanacearum.</title>
        <authorList>
            <person name="Salanoubat M."/>
            <person name="Genin S."/>
            <person name="Artiguenave F."/>
            <person name="Gouzy J."/>
            <person name="Mangenot S."/>
            <person name="Arlat M."/>
            <person name="Billault A."/>
            <person name="Brottier P."/>
            <person name="Camus J.-C."/>
            <person name="Cattolico L."/>
            <person name="Chandler M."/>
            <person name="Choisne N."/>
            <person name="Claudel-Renard C."/>
            <person name="Cunnac S."/>
            <person name="Demange N."/>
            <person name="Gaspin C."/>
            <person name="Lavie M."/>
            <person name="Moisan A."/>
            <person name="Robert C."/>
            <person name="Saurin W."/>
            <person name="Schiex T."/>
            <person name="Siguier P."/>
            <person name="Thebault P."/>
            <person name="Whalen M."/>
            <person name="Wincker P."/>
            <person name="Levy M."/>
            <person name="Weissenbach J."/>
            <person name="Boucher C.A."/>
        </authorList>
    </citation>
    <scope>NUCLEOTIDE SEQUENCE [LARGE SCALE GENOMIC DNA]</scope>
    <source>
        <strain>ATCC BAA-1114 / GMI1000</strain>
    </source>
</reference>
<keyword id="KW-0143">Chaperone</keyword>
<keyword id="KW-0963">Cytoplasm</keyword>
<keyword id="KW-0533">Nickel</keyword>
<keyword id="KW-0996">Nickel insertion</keyword>
<keyword id="KW-1185">Reference proteome</keyword>
<name>UREE_RALN1</name>
<organism>
    <name type="scientific">Ralstonia nicotianae (strain ATCC BAA-1114 / GMI1000)</name>
    <name type="common">Ralstonia solanacearum</name>
    <dbReference type="NCBI Taxonomy" id="267608"/>
    <lineage>
        <taxon>Bacteria</taxon>
        <taxon>Pseudomonadati</taxon>
        <taxon>Pseudomonadota</taxon>
        <taxon>Betaproteobacteria</taxon>
        <taxon>Burkholderiales</taxon>
        <taxon>Burkholderiaceae</taxon>
        <taxon>Ralstonia</taxon>
        <taxon>Ralstonia solanacearum species complex</taxon>
    </lineage>
</organism>